<accession>Q6FM46</accession>
<comment type="function">
    <text evidence="1">The coatomer is a cytosolic protein complex that binds to dilysine motifs and reversibly associates with Golgi non-clathrin-coated vesicles, which further mediate biosynthetic protein transport from the ER, via the Golgi up to the trans Golgi network. Coatomer complex is required for budding from Golgi membranes, and is essential for the retrograde Golgi-to-ER transport of dilysine-tagged proteins (By similarity).</text>
</comment>
<comment type="subunit">
    <text evidence="1">Oligomeric complex that consists of at least the alpha, beta, beta', gamma, delta, epsilon and zeta subunits.</text>
</comment>
<comment type="subcellular location">
    <subcellularLocation>
        <location evidence="1">Cytoplasm</location>
    </subcellularLocation>
    <subcellularLocation>
        <location evidence="1">Golgi apparatus membrane</location>
        <topology evidence="1">Peripheral membrane protein</topology>
        <orientation evidence="1">Cytoplasmic side</orientation>
    </subcellularLocation>
    <subcellularLocation>
        <location evidence="1">Cytoplasmic vesicle</location>
        <location evidence="1">COPI-coated vesicle membrane</location>
        <topology evidence="1">Peripheral membrane protein</topology>
        <orientation evidence="1">Cytoplasmic side</orientation>
    </subcellularLocation>
    <text evidence="1">The coatomer is cytoplasmic or polymerized on the cytoplasmic side of the Golgi, as well as on the vesicles/buds originating from it.</text>
</comment>
<feature type="chain" id="PRO_0000408946" description="Coatomer subunit beta">
    <location>
        <begin position="1"/>
        <end position="972"/>
    </location>
</feature>
<feature type="repeat" description="HEAT 1" evidence="2">
    <location>
        <begin position="79"/>
        <end position="113"/>
    </location>
</feature>
<feature type="repeat" description="HEAT 2" evidence="2">
    <location>
        <begin position="133"/>
        <end position="170"/>
    </location>
</feature>
<feature type="repeat" description="HEAT 3" evidence="2">
    <location>
        <begin position="317"/>
        <end position="354"/>
    </location>
</feature>
<feature type="repeat" description="HEAT 4" evidence="2">
    <location>
        <begin position="397"/>
        <end position="434"/>
    </location>
</feature>
<feature type="repeat" description="HEAT 5" evidence="2">
    <location>
        <begin position="481"/>
        <end position="518"/>
    </location>
</feature>
<feature type="region of interest" description="Disordered" evidence="3">
    <location>
        <begin position="494"/>
        <end position="522"/>
    </location>
</feature>
<reference evidence="4" key="1">
    <citation type="journal article" date="2004" name="Nature">
        <title>Genome evolution in yeasts.</title>
        <authorList>
            <person name="Dujon B."/>
            <person name="Sherman D."/>
            <person name="Fischer G."/>
            <person name="Durrens P."/>
            <person name="Casaregola S."/>
            <person name="Lafontaine I."/>
            <person name="de Montigny J."/>
            <person name="Marck C."/>
            <person name="Neuveglise C."/>
            <person name="Talla E."/>
            <person name="Goffard N."/>
            <person name="Frangeul L."/>
            <person name="Aigle M."/>
            <person name="Anthouard V."/>
            <person name="Babour A."/>
            <person name="Barbe V."/>
            <person name="Barnay S."/>
            <person name="Blanchin S."/>
            <person name="Beckerich J.-M."/>
            <person name="Beyne E."/>
            <person name="Bleykasten C."/>
            <person name="Boisrame A."/>
            <person name="Boyer J."/>
            <person name="Cattolico L."/>
            <person name="Confanioleri F."/>
            <person name="de Daruvar A."/>
            <person name="Despons L."/>
            <person name="Fabre E."/>
            <person name="Fairhead C."/>
            <person name="Ferry-Dumazet H."/>
            <person name="Groppi A."/>
            <person name="Hantraye F."/>
            <person name="Hennequin C."/>
            <person name="Jauniaux N."/>
            <person name="Joyet P."/>
            <person name="Kachouri R."/>
            <person name="Kerrest A."/>
            <person name="Koszul R."/>
            <person name="Lemaire M."/>
            <person name="Lesur I."/>
            <person name="Ma L."/>
            <person name="Muller H."/>
            <person name="Nicaud J.-M."/>
            <person name="Nikolski M."/>
            <person name="Oztas S."/>
            <person name="Ozier-Kalogeropoulos O."/>
            <person name="Pellenz S."/>
            <person name="Potier S."/>
            <person name="Richard G.-F."/>
            <person name="Straub M.-L."/>
            <person name="Suleau A."/>
            <person name="Swennen D."/>
            <person name="Tekaia F."/>
            <person name="Wesolowski-Louvel M."/>
            <person name="Westhof E."/>
            <person name="Wirth B."/>
            <person name="Zeniou-Meyer M."/>
            <person name="Zivanovic Y."/>
            <person name="Bolotin-Fukuhara M."/>
            <person name="Thierry A."/>
            <person name="Bouchier C."/>
            <person name="Caudron B."/>
            <person name="Scarpelli C."/>
            <person name="Gaillardin C."/>
            <person name="Weissenbach J."/>
            <person name="Wincker P."/>
            <person name="Souciet J.-L."/>
        </authorList>
    </citation>
    <scope>NUCLEOTIDE SEQUENCE [LARGE SCALE GENOMIC DNA]</scope>
    <source>
        <strain>ATCC 2001 / BCRC 20586 / JCM 3761 / NBRC 0622 / NRRL Y-65 / CBS 138</strain>
    </source>
</reference>
<evidence type="ECO:0000250" key="1">
    <source>
        <dbReference type="UniProtKB" id="P41810"/>
    </source>
</evidence>
<evidence type="ECO:0000255" key="2"/>
<evidence type="ECO:0000256" key="3">
    <source>
        <dbReference type="SAM" id="MobiDB-lite"/>
    </source>
</evidence>
<evidence type="ECO:0000312" key="4">
    <source>
        <dbReference type="EMBL" id="CAG61661.1"/>
    </source>
</evidence>
<name>COPB_CANGA</name>
<dbReference type="EMBL" id="CR380957">
    <property type="protein sequence ID" value="CAG61661.1"/>
    <property type="molecule type" value="Genomic_DNA"/>
</dbReference>
<dbReference type="RefSeq" id="XP_448698.1">
    <property type="nucleotide sequence ID" value="XM_448698.1"/>
</dbReference>
<dbReference type="SMR" id="Q6FM46"/>
<dbReference type="FunCoup" id="Q6FM46">
    <property type="interactions" value="1368"/>
</dbReference>
<dbReference type="STRING" id="284593.Q6FM46"/>
<dbReference type="EnsemblFungi" id="CAGL0K11088g-T">
    <property type="protein sequence ID" value="CAGL0K11088g-T-p1"/>
    <property type="gene ID" value="CAGL0K11088g"/>
</dbReference>
<dbReference type="KEGG" id="cgr:2890086"/>
<dbReference type="CGD" id="CAL0134965">
    <property type="gene designation" value="CAGL0K11088g"/>
</dbReference>
<dbReference type="VEuPathDB" id="FungiDB:CAGL0K11088g"/>
<dbReference type="eggNOG" id="KOG1058">
    <property type="taxonomic scope" value="Eukaryota"/>
</dbReference>
<dbReference type="HOGENOM" id="CLU_006949_0_0_1"/>
<dbReference type="InParanoid" id="Q6FM46"/>
<dbReference type="OMA" id="IYKNFDW"/>
<dbReference type="Proteomes" id="UP000002428">
    <property type="component" value="Chromosome K"/>
</dbReference>
<dbReference type="GO" id="GO:0030126">
    <property type="term" value="C:COPI vesicle coat"/>
    <property type="evidence" value="ECO:0007669"/>
    <property type="project" value="EnsemblFungi"/>
</dbReference>
<dbReference type="GO" id="GO:0000139">
    <property type="term" value="C:Golgi membrane"/>
    <property type="evidence" value="ECO:0007669"/>
    <property type="project" value="UniProtKB-SubCell"/>
</dbReference>
<dbReference type="GO" id="GO:0005198">
    <property type="term" value="F:structural molecule activity"/>
    <property type="evidence" value="ECO:0007669"/>
    <property type="project" value="InterPro"/>
</dbReference>
<dbReference type="GO" id="GO:0006888">
    <property type="term" value="P:endoplasmic reticulum to Golgi vesicle-mediated transport"/>
    <property type="evidence" value="ECO:0007669"/>
    <property type="project" value="EnsemblFungi"/>
</dbReference>
<dbReference type="GO" id="GO:0006891">
    <property type="term" value="P:intra-Golgi vesicle-mediated transport"/>
    <property type="evidence" value="ECO:0007669"/>
    <property type="project" value="TreeGrafter"/>
</dbReference>
<dbReference type="GO" id="GO:0008298">
    <property type="term" value="P:intracellular mRNA localization"/>
    <property type="evidence" value="ECO:0007669"/>
    <property type="project" value="EnsemblFungi"/>
</dbReference>
<dbReference type="GO" id="GO:0006886">
    <property type="term" value="P:intracellular protein transport"/>
    <property type="evidence" value="ECO:0007669"/>
    <property type="project" value="InterPro"/>
</dbReference>
<dbReference type="FunFam" id="1.25.10.10:FF:000430">
    <property type="entry name" value="Coatomer subunit beta"/>
    <property type="match status" value="1"/>
</dbReference>
<dbReference type="Gene3D" id="1.25.10.10">
    <property type="entry name" value="Leucine-rich Repeat Variant"/>
    <property type="match status" value="1"/>
</dbReference>
<dbReference type="InterPro" id="IPR011989">
    <property type="entry name" value="ARM-like"/>
</dbReference>
<dbReference type="InterPro" id="IPR016024">
    <property type="entry name" value="ARM-type_fold"/>
</dbReference>
<dbReference type="InterPro" id="IPR002553">
    <property type="entry name" value="Clathrin/coatomer_adapt-like_N"/>
</dbReference>
<dbReference type="InterPro" id="IPR011710">
    <property type="entry name" value="Coatomer_bsu_C"/>
</dbReference>
<dbReference type="InterPro" id="IPR016460">
    <property type="entry name" value="COPB1"/>
</dbReference>
<dbReference type="InterPro" id="IPR029446">
    <property type="entry name" value="COPB1_appendage_platform_dom"/>
</dbReference>
<dbReference type="PANTHER" id="PTHR10635">
    <property type="entry name" value="COATOMER SUBUNIT BETA"/>
    <property type="match status" value="1"/>
</dbReference>
<dbReference type="PANTHER" id="PTHR10635:SF0">
    <property type="entry name" value="COATOMER SUBUNIT BETA"/>
    <property type="match status" value="1"/>
</dbReference>
<dbReference type="Pfam" id="PF01602">
    <property type="entry name" value="Adaptin_N"/>
    <property type="match status" value="1"/>
</dbReference>
<dbReference type="Pfam" id="PF07718">
    <property type="entry name" value="Coatamer_beta_C"/>
    <property type="match status" value="1"/>
</dbReference>
<dbReference type="Pfam" id="PF14806">
    <property type="entry name" value="Coatomer_b_Cpla"/>
    <property type="match status" value="1"/>
</dbReference>
<dbReference type="PIRSF" id="PIRSF005727">
    <property type="entry name" value="Coatomer_beta_subunit"/>
    <property type="match status" value="1"/>
</dbReference>
<dbReference type="SUPFAM" id="SSF48371">
    <property type="entry name" value="ARM repeat"/>
    <property type="match status" value="1"/>
</dbReference>
<protein>
    <recommendedName>
        <fullName evidence="1">Coatomer subunit beta</fullName>
    </recommendedName>
    <alternativeName>
        <fullName evidence="1">Beta-coat protein</fullName>
        <shortName evidence="1">Beta-COP</shortName>
    </alternativeName>
</protein>
<sequence>MTAEIDPPAYTLVFNPATNSTPNTVAEFQKALEKGSDETKIEAMKEILVTMLEGNPLPEMLMHIIRFVMPSKNKKLKKLLYFYWEIVPKLDQDGKLRHEMILVCNAIQHDLQHPNEFIRGNTLRFLTKLREPELLEQMVPSTLACLEYRHAYVRKYAILAVLSIYKVSEHLLPDAKEIINTFLLAETDPICKRNAFLGLSELDRDNALQYLQDNIDDIESLDPLLQAAFVQFIRKDAIQTPALKSQYCDLLLELLASATADEVVFETALALTILSGNQTVLIKAVSKMIDLAVKVSDNNVKIIVLDRIQDINERNPGCLEELTLDILRVLNAEDIDVRSKALTIAMDLVTSRNIEDVVQLLKKELQTTVINNEKEKSSDYRSLLIKTIRGIAVRFEEIAANIVSLLLDFITDLNSVAANGVIAFVKDVVELYPQLRSNILENLIAKLESVNSAKAYRGALWILGEYSTTESEIQDSWKHIRQSIGEIPILQTELKNQRKSQDEDDEATEESATKQAGPVILPDGTYATENAFGSSNNDNKKKLVENENRPPLRRFVLGGDFYTASILASTIVKLVLRFEKVSERAAVLNALKAEGLLMLVSIIRVGESSIVEKNIDEDSQERITTAIAILMDESNPDESSAERELLNIAFLDATKASFKGQFVAQKKTKLFKSSPVRKHKEAIDQSVSFRLLQENDNTAVSGDAIDEDLQLAIRGDAARDTSSIAISKLKKIVPLTGFSDPVYAEACITTNQFDVVLDVLLVNQTKETLKNFHVQFATLGDLKIVENPPATNVVPHGFHRVSVTVKVSSADTGVIFGNIIYDGGHGQDARYVILNDVHVDLMDYIKPAKTDDESFRTMWNAFEWENKISVKSKLPSLHAYLDELIKGTNMGVLTPVESLGEKDCRFLCCNLYARSSFGEDALANLCIELDPNTEQVVGYVRIRSKGQGLALSLGDRVALIAKQNNKVIVGHV</sequence>
<gene>
    <name evidence="1" type="primary">SEC26</name>
    <name type="ordered locus">CAGL0K11088g</name>
</gene>
<organism>
    <name type="scientific">Candida glabrata (strain ATCC 2001 / BCRC 20586 / JCM 3761 / NBRC 0622 / NRRL Y-65 / CBS 138)</name>
    <name type="common">Yeast</name>
    <name type="synonym">Nakaseomyces glabratus</name>
    <dbReference type="NCBI Taxonomy" id="284593"/>
    <lineage>
        <taxon>Eukaryota</taxon>
        <taxon>Fungi</taxon>
        <taxon>Dikarya</taxon>
        <taxon>Ascomycota</taxon>
        <taxon>Saccharomycotina</taxon>
        <taxon>Saccharomycetes</taxon>
        <taxon>Saccharomycetales</taxon>
        <taxon>Saccharomycetaceae</taxon>
        <taxon>Nakaseomyces</taxon>
    </lineage>
</organism>
<keyword id="KW-0963">Cytoplasm</keyword>
<keyword id="KW-0968">Cytoplasmic vesicle</keyword>
<keyword id="KW-0931">ER-Golgi transport</keyword>
<keyword id="KW-0333">Golgi apparatus</keyword>
<keyword id="KW-0472">Membrane</keyword>
<keyword id="KW-0653">Protein transport</keyword>
<keyword id="KW-1185">Reference proteome</keyword>
<keyword id="KW-0677">Repeat</keyword>
<keyword id="KW-0813">Transport</keyword>
<proteinExistence type="inferred from homology"/>